<sequence>MPQLNPKPWFMILFFSWVIFLTIIPTKIINHIQPNDPTQVDAKEHKNDTWNWPW</sequence>
<accession>Q9MIY6</accession>
<organism>
    <name type="scientific">Danio rerio</name>
    <name type="common">Zebrafish</name>
    <name type="synonym">Brachydanio rerio</name>
    <dbReference type="NCBI Taxonomy" id="7955"/>
    <lineage>
        <taxon>Eukaryota</taxon>
        <taxon>Metazoa</taxon>
        <taxon>Chordata</taxon>
        <taxon>Craniata</taxon>
        <taxon>Vertebrata</taxon>
        <taxon>Euteleostomi</taxon>
        <taxon>Actinopterygii</taxon>
        <taxon>Neopterygii</taxon>
        <taxon>Teleostei</taxon>
        <taxon>Ostariophysi</taxon>
        <taxon>Cypriniformes</taxon>
        <taxon>Danionidae</taxon>
        <taxon>Danioninae</taxon>
        <taxon>Danio</taxon>
    </lineage>
</organism>
<gene>
    <name evidence="1" type="primary">mt-atp8</name>
    <name type="synonym">atp8</name>
    <name type="synonym">atpase8</name>
    <name type="synonym">mtatp8</name>
</gene>
<name>ATP8_DANRE</name>
<keyword id="KW-0066">ATP synthesis</keyword>
<keyword id="KW-0138">CF(0)</keyword>
<keyword id="KW-0375">Hydrogen ion transport</keyword>
<keyword id="KW-0406">Ion transport</keyword>
<keyword id="KW-0472">Membrane</keyword>
<keyword id="KW-0496">Mitochondrion</keyword>
<keyword id="KW-1185">Reference proteome</keyword>
<keyword id="KW-0812">Transmembrane</keyword>
<keyword id="KW-1133">Transmembrane helix</keyword>
<keyword id="KW-0813">Transport</keyword>
<comment type="function">
    <text evidence="1 2">Subunit 8, of the mitochondrial membrane ATP synthase complex (F(1)F(0) ATP synthase or Complex V) that produces ATP from ADP in the presence of a proton gradient across the membrane which is generated by electron transport complexes of the respiratory chain. ATP synthase complex consist of a soluble F(1) head domain - the catalytic core - and a membrane F(1) domain - the membrane proton channel. These two domains are linked by a central stalk rotating inside the F(1) region and a stationary peripheral stalk. During catalysis, ATP synthesis in the catalytic domain of F(1) is coupled via a rotary mechanism of the central stalk subunits to proton translocation (By similarity). In vivo, can only synthesize ATP although its ATP hydrolase activity can be activated artificially in vitro (By similarity). Part of the complex F(0) domain (By similarity).</text>
</comment>
<comment type="subunit">
    <text evidence="1">Component of the ATP synthase complex composed at least of ATP5F1A/subunit alpha, ATP5F1B/subunit beta, ATP5MC1/subunit c (homooctomer), MT-ATP6/subunit a, MT-ATP8/subunit 8, ATP5ME/subunit e, ATP5MF/subunit f, ATP5MG/subunit g, ATP5MK/subunit k, ATP5MJ/subunit j, ATP5F1C/subunit gamma, ATP5F1D/subunit delta, ATP5F1E/subunit epsilon, ATP5PF/subunit F6, ATP5PB/subunit b, ATP5PD/subunit d, ATP5PO/subunit OSCP. ATP synthase complex consists of a soluble F(1) head domain (subunits alpha(3) and beta(3)) - the catalytic core - and a membrane F(0) domain - the membrane proton channel (subunits c, a, 8, e, f, g, k and j). These two domains are linked by a central stalk (subunits gamma, delta, and epsilon) rotating inside the F1 region and a stationary peripheral stalk (subunits F6, b, d, and OSCP).</text>
</comment>
<comment type="subcellular location">
    <subcellularLocation>
        <location>Mitochondrion membrane</location>
        <topology>Single-pass membrane protein</topology>
    </subcellularLocation>
</comment>
<comment type="similarity">
    <text evidence="5">Belongs to the ATPase protein 8 family.</text>
</comment>
<evidence type="ECO:0000250" key="1">
    <source>
        <dbReference type="UniProtKB" id="P03928"/>
    </source>
</evidence>
<evidence type="ECO:0000250" key="2">
    <source>
        <dbReference type="UniProtKB" id="P19483"/>
    </source>
</evidence>
<evidence type="ECO:0000255" key="3"/>
<evidence type="ECO:0000256" key="4">
    <source>
        <dbReference type="SAM" id="MobiDB-lite"/>
    </source>
</evidence>
<evidence type="ECO:0000305" key="5"/>
<evidence type="ECO:0000312" key="6">
    <source>
        <dbReference type="Proteomes" id="UP000000437"/>
    </source>
</evidence>
<proteinExistence type="inferred from homology"/>
<geneLocation type="mitochondrion"/>
<reference key="1">
    <citation type="journal article" date="2001" name="Genome Res.">
        <title>The complete sequence of the zebrafish (Danio rerio) mitochondrial genome and evolutionary patterns in vertebrate mitochondrial DNA.</title>
        <authorList>
            <person name="Broughton R.E."/>
            <person name="Milam J.E."/>
            <person name="Roe B.A."/>
        </authorList>
    </citation>
    <scope>NUCLEOTIDE SEQUENCE [LARGE SCALE GENOMIC DNA]</scope>
    <source>
        <strain evidence="6">Tuebingen</strain>
    </source>
</reference>
<dbReference type="EMBL" id="AC024175">
    <property type="protein sequence ID" value="AAF74301.1"/>
    <property type="molecule type" value="Genomic_DNA"/>
</dbReference>
<dbReference type="RefSeq" id="NP_059335.1">
    <property type="nucleotide sequence ID" value="NC_002333.2"/>
</dbReference>
<dbReference type="SMR" id="Q9MIY6"/>
<dbReference type="STRING" id="7955.ENSDARP00000087873"/>
<dbReference type="PaxDb" id="7955-ENSDARP00000087873"/>
<dbReference type="Ensembl" id="ENSDART00000093611">
    <property type="protein sequence ID" value="ENSDARP00000087873"/>
    <property type="gene ID" value="ENSDARG00000063910"/>
</dbReference>
<dbReference type="GeneID" id="140520"/>
<dbReference type="KEGG" id="dre:140520"/>
<dbReference type="AGR" id="ZFIN:ZDB-GENE-011205-19"/>
<dbReference type="CTD" id="4509"/>
<dbReference type="ZFIN" id="ZDB-GENE-011205-19">
    <property type="gene designation" value="mt-atp8"/>
</dbReference>
<dbReference type="eggNOG" id="ENOG502SGKX">
    <property type="taxonomic scope" value="Eukaryota"/>
</dbReference>
<dbReference type="HOGENOM" id="CLU_212888_0_0_1"/>
<dbReference type="InParanoid" id="Q9MIY6"/>
<dbReference type="OMA" id="MPQLNPN"/>
<dbReference type="OrthoDB" id="8734014at2759"/>
<dbReference type="PhylomeDB" id="Q9MIY6"/>
<dbReference type="PRO" id="PR:Q9MIY6"/>
<dbReference type="Proteomes" id="UP000000437">
    <property type="component" value="Mitochondrion MT"/>
</dbReference>
<dbReference type="Bgee" id="ENSDARG00000063910">
    <property type="expression patterns" value="Expressed in blastula and 39 other cell types or tissues"/>
</dbReference>
<dbReference type="ExpressionAtlas" id="Q9MIY6">
    <property type="expression patterns" value="baseline and differential"/>
</dbReference>
<dbReference type="GO" id="GO:0031966">
    <property type="term" value="C:mitochondrial membrane"/>
    <property type="evidence" value="ECO:0007669"/>
    <property type="project" value="UniProtKB-SubCell"/>
</dbReference>
<dbReference type="GO" id="GO:0045259">
    <property type="term" value="C:proton-transporting ATP synthase complex"/>
    <property type="evidence" value="ECO:0007669"/>
    <property type="project" value="UniProtKB-KW"/>
</dbReference>
<dbReference type="GO" id="GO:0015078">
    <property type="term" value="F:proton transmembrane transporter activity"/>
    <property type="evidence" value="ECO:0007669"/>
    <property type="project" value="InterPro"/>
</dbReference>
<dbReference type="GO" id="GO:0015986">
    <property type="term" value="P:proton motive force-driven ATP synthesis"/>
    <property type="evidence" value="ECO:0007669"/>
    <property type="project" value="InterPro"/>
</dbReference>
<dbReference type="InterPro" id="IPR001421">
    <property type="entry name" value="ATP8_metazoa"/>
</dbReference>
<dbReference type="InterPro" id="IPR050635">
    <property type="entry name" value="ATPase_protein_8"/>
</dbReference>
<dbReference type="PANTHER" id="PTHR39937">
    <property type="entry name" value="ATP SYNTHASE PROTEIN 8"/>
    <property type="match status" value="1"/>
</dbReference>
<dbReference type="PANTHER" id="PTHR39937:SF1">
    <property type="entry name" value="ATP SYNTHASE PROTEIN 8"/>
    <property type="match status" value="1"/>
</dbReference>
<dbReference type="Pfam" id="PF00895">
    <property type="entry name" value="ATP-synt_8"/>
    <property type="match status" value="1"/>
</dbReference>
<feature type="chain" id="PRO_0000195498" description="ATP synthase F(0) complex subunit 8">
    <location>
        <begin position="1"/>
        <end position="54"/>
    </location>
</feature>
<feature type="transmembrane region" description="Helical" evidence="3">
    <location>
        <begin position="9"/>
        <end position="29"/>
    </location>
</feature>
<feature type="region of interest" description="Disordered" evidence="4">
    <location>
        <begin position="35"/>
        <end position="54"/>
    </location>
</feature>
<protein>
    <recommendedName>
        <fullName evidence="1">ATP synthase F(0) complex subunit 8</fullName>
    </recommendedName>
    <alternativeName>
        <fullName>A6L</fullName>
    </alternativeName>
    <alternativeName>
        <fullName>F-ATPase subunit 8</fullName>
    </alternativeName>
</protein>